<feature type="chain" id="PRO_0000291852" description="Transcriptional regulatory protein LytR">
    <location>
        <begin position="1"/>
        <end position="246"/>
    </location>
</feature>
<feature type="domain" description="Response regulatory" evidence="5">
    <location>
        <begin position="2"/>
        <end position="116"/>
    </location>
</feature>
<feature type="domain" description="HTH LytTR-type" evidence="4">
    <location>
        <begin position="141"/>
        <end position="245"/>
    </location>
</feature>
<feature type="modified residue" description="4-aspartylphosphate" evidence="5">
    <location>
        <position position="53"/>
    </location>
</feature>
<name>LYTR_STAAB</name>
<proteinExistence type="inferred from homology"/>
<evidence type="ECO:0000250" key="1"/>
<evidence type="ECO:0000250" key="2">
    <source>
        <dbReference type="UniProtKB" id="P60609"/>
    </source>
</evidence>
<evidence type="ECO:0000250" key="3">
    <source>
        <dbReference type="UniProtKB" id="P60611"/>
    </source>
</evidence>
<evidence type="ECO:0000255" key="4">
    <source>
        <dbReference type="PROSITE-ProRule" id="PRU00112"/>
    </source>
</evidence>
<evidence type="ECO:0000255" key="5">
    <source>
        <dbReference type="PROSITE-ProRule" id="PRU00169"/>
    </source>
</evidence>
<dbReference type="EMBL" id="AJ938182">
    <property type="protein sequence ID" value="CAI79888.1"/>
    <property type="molecule type" value="Genomic_DNA"/>
</dbReference>
<dbReference type="RefSeq" id="WP_000645455.1">
    <property type="nucleotide sequence ID" value="NC_007622.1"/>
</dbReference>
<dbReference type="SMR" id="Q2YV67"/>
<dbReference type="KEGG" id="sab:SAB0200"/>
<dbReference type="HOGENOM" id="CLU_000445_14_1_9"/>
<dbReference type="GO" id="GO:0005737">
    <property type="term" value="C:cytoplasm"/>
    <property type="evidence" value="ECO:0007669"/>
    <property type="project" value="UniProtKB-SubCell"/>
</dbReference>
<dbReference type="GO" id="GO:0003677">
    <property type="term" value="F:DNA binding"/>
    <property type="evidence" value="ECO:0007669"/>
    <property type="project" value="UniProtKB-KW"/>
</dbReference>
<dbReference type="GO" id="GO:0000156">
    <property type="term" value="F:phosphorelay response regulator activity"/>
    <property type="evidence" value="ECO:0007669"/>
    <property type="project" value="InterPro"/>
</dbReference>
<dbReference type="CDD" id="cd17532">
    <property type="entry name" value="REC_LytTR_AlgR-like"/>
    <property type="match status" value="1"/>
</dbReference>
<dbReference type="FunFam" id="3.40.50.2300:FF:000134">
    <property type="entry name" value="Autolysin response regulator LytR"/>
    <property type="match status" value="1"/>
</dbReference>
<dbReference type="Gene3D" id="3.40.50.2300">
    <property type="match status" value="1"/>
</dbReference>
<dbReference type="Gene3D" id="2.40.50.1020">
    <property type="entry name" value="LytTr DNA-binding domain"/>
    <property type="match status" value="1"/>
</dbReference>
<dbReference type="InterPro" id="IPR011006">
    <property type="entry name" value="CheY-like_superfamily"/>
</dbReference>
<dbReference type="InterPro" id="IPR046947">
    <property type="entry name" value="LytR-like"/>
</dbReference>
<dbReference type="InterPro" id="IPR007492">
    <property type="entry name" value="LytTR_DNA-bd_dom"/>
</dbReference>
<dbReference type="InterPro" id="IPR001789">
    <property type="entry name" value="Sig_transdc_resp-reg_receiver"/>
</dbReference>
<dbReference type="NCBIfam" id="NF010684">
    <property type="entry name" value="PRK14084.1"/>
    <property type="match status" value="1"/>
</dbReference>
<dbReference type="PANTHER" id="PTHR37299:SF1">
    <property type="entry name" value="STAGE 0 SPORULATION PROTEIN A HOMOLOG"/>
    <property type="match status" value="1"/>
</dbReference>
<dbReference type="PANTHER" id="PTHR37299">
    <property type="entry name" value="TRANSCRIPTIONAL REGULATOR-RELATED"/>
    <property type="match status" value="1"/>
</dbReference>
<dbReference type="Pfam" id="PF04397">
    <property type="entry name" value="LytTR"/>
    <property type="match status" value="1"/>
</dbReference>
<dbReference type="Pfam" id="PF00072">
    <property type="entry name" value="Response_reg"/>
    <property type="match status" value="1"/>
</dbReference>
<dbReference type="SMART" id="SM00850">
    <property type="entry name" value="LytTR"/>
    <property type="match status" value="1"/>
</dbReference>
<dbReference type="SMART" id="SM00448">
    <property type="entry name" value="REC"/>
    <property type="match status" value="1"/>
</dbReference>
<dbReference type="SUPFAM" id="SSF52172">
    <property type="entry name" value="CheY-like"/>
    <property type="match status" value="1"/>
</dbReference>
<dbReference type="PROSITE" id="PS50930">
    <property type="entry name" value="HTH_LYTTR"/>
    <property type="match status" value="1"/>
</dbReference>
<dbReference type="PROSITE" id="PS50110">
    <property type="entry name" value="RESPONSE_REGULATORY"/>
    <property type="match status" value="1"/>
</dbReference>
<sequence length="246" mass="28249">MKALIIDDEPLARNELTYLLNEIGGFEEINEAENVKETLEALLINQYDIIFLDVNLMDENGIELGAKIQKMKEPPAIIFATAHDQYAVQAFELNATDYILKPFGQKRIEQAVNKVRATKAKDDNSANAIVNDMSANFDQSLPVEIDDKIHMLKQQNIIGIGTHNGITTIHTTNHKYETTEPLNRYEKRLNPTYFIRIHRSYIINTKHIKEVQQWFNYTYMVILTNGVKMQVGRSFMKDFKASIGLL</sequence>
<organism>
    <name type="scientific">Staphylococcus aureus (strain bovine RF122 / ET3-1)</name>
    <dbReference type="NCBI Taxonomy" id="273036"/>
    <lineage>
        <taxon>Bacteria</taxon>
        <taxon>Bacillati</taxon>
        <taxon>Bacillota</taxon>
        <taxon>Bacilli</taxon>
        <taxon>Bacillales</taxon>
        <taxon>Staphylococcaceae</taxon>
        <taxon>Staphylococcus</taxon>
    </lineage>
</organism>
<accession>Q2YV67</accession>
<protein>
    <recommendedName>
        <fullName>Transcriptional regulatory protein LytR</fullName>
    </recommendedName>
    <alternativeName>
        <fullName>Sensory transduction protein LytR</fullName>
    </alternativeName>
</protein>
<gene>
    <name type="primary">lytR</name>
    <name type="ordered locus">SAB0200</name>
</gene>
<keyword id="KW-0963">Cytoplasm</keyword>
<keyword id="KW-0238">DNA-binding</keyword>
<keyword id="KW-0597">Phosphoprotein</keyword>
<keyword id="KW-0804">Transcription</keyword>
<keyword id="KW-0805">Transcription regulation</keyword>
<keyword id="KW-0902">Two-component regulatory system</keyword>
<reference key="1">
    <citation type="journal article" date="2007" name="PLoS ONE">
        <title>Molecular correlates of host specialization in Staphylococcus aureus.</title>
        <authorList>
            <person name="Herron-Olson L."/>
            <person name="Fitzgerald J.R."/>
            <person name="Musser J.M."/>
            <person name="Kapur V."/>
        </authorList>
    </citation>
    <scope>NUCLEOTIDE SEQUENCE [LARGE SCALE GENOMIC DNA]</scope>
    <source>
        <strain>bovine RF122 / ET3-1</strain>
    </source>
</reference>
<comment type="function">
    <text evidence="3">Member of the two-component regulatory system LytR/LytS that regulates genes involved in autolysis, programmed cell death, biofilm formation and cell wall metabolism. Also participates in sensing and responding to host defense cationic antimicrobial peptides (HDPs). Upon phosphorylation by LytS, functions as a transcription regulator by direct binding to promoter regions of target genes including lrgA and lrgB, to positively regulate their expression.</text>
</comment>
<comment type="subunit">
    <text evidence="2">Homodimer; when phosphorylated.</text>
</comment>
<comment type="subcellular location">
    <subcellularLocation>
        <location evidence="1">Cytoplasm</location>
    </subcellularLocation>
</comment>
<comment type="PTM">
    <text evidence="2">Phosphorylated and dephosphorylated by LytS.</text>
</comment>